<protein>
    <recommendedName>
        <fullName evidence="4">Omega-hexatoxin-Hmo1a</fullName>
        <shortName evidence="5">Omega-HXTX-Hmo1a</shortName>
    </recommendedName>
</protein>
<proteinExistence type="inferred from homology"/>
<organism>
    <name type="scientific">Hadronyche modesta</name>
    <name type="common">Victorian funnel-web spider</name>
    <dbReference type="NCBI Taxonomy" id="1337084"/>
    <lineage>
        <taxon>Eukaryota</taxon>
        <taxon>Metazoa</taxon>
        <taxon>Ecdysozoa</taxon>
        <taxon>Arthropoda</taxon>
        <taxon>Chelicerata</taxon>
        <taxon>Arachnida</taxon>
        <taxon>Araneae</taxon>
        <taxon>Mygalomorphae</taxon>
        <taxon>Hexathelidae</taxon>
        <taxon>Hadronyche</taxon>
    </lineage>
</organism>
<feature type="signal peptide" evidence="3">
    <location>
        <begin position="1"/>
        <end position="22"/>
    </location>
</feature>
<feature type="propeptide" id="PRO_0000430914" evidence="1">
    <location>
        <begin position="23"/>
        <end position="45"/>
    </location>
</feature>
<feature type="chain" id="PRO_0000430915" description="Omega-hexatoxin-Hmo1a">
    <location>
        <begin position="48"/>
        <end position="84"/>
    </location>
</feature>
<feature type="site" description="Critical for insecticidal activity" evidence="2">
    <location>
        <position position="57"/>
    </location>
</feature>
<feature type="site" description="Critical for insecticidal activity" evidence="2">
    <location>
        <position position="74"/>
    </location>
</feature>
<feature type="site" description="Critical for insecticidal activity" evidence="2">
    <location>
        <position position="82"/>
    </location>
</feature>
<feature type="disulfide bond" evidence="2">
    <location>
        <begin position="51"/>
        <end position="65"/>
    </location>
</feature>
<feature type="disulfide bond" evidence="2">
    <location>
        <begin position="58"/>
        <end position="69"/>
    </location>
</feature>
<feature type="disulfide bond" evidence="2">
    <location>
        <begin position="64"/>
        <end position="83"/>
    </location>
</feature>
<feature type="sequence conflict" description="In Ref. 1." ref="1">
    <original>A</original>
    <variation>V</variation>
    <location>
        <position position="9"/>
    </location>
</feature>
<feature type="sequence conflict" description="In Ref. 1." ref="1">
    <original>F</original>
    <variation>L</variation>
    <location>
        <position position="29"/>
    </location>
</feature>
<sequence>MNTATGVIALLVLATVIGCIEAEDTREDFQGGFESYDGEAAEKIFRRAPVCTRTDQPCPYNEDCCSGSCTLKKNENGNLVKRCD</sequence>
<keyword id="KW-0108">Calcium channel impairing toxin</keyword>
<keyword id="KW-0165">Cleavage on pair of basic residues</keyword>
<keyword id="KW-1015">Disulfide bond</keyword>
<keyword id="KW-0872">Ion channel impairing toxin</keyword>
<keyword id="KW-0960">Knottin</keyword>
<keyword id="KW-0964">Secreted</keyword>
<keyword id="KW-0732">Signal</keyword>
<keyword id="KW-0800">Toxin</keyword>
<keyword id="KW-1218">Voltage-gated calcium channel impairing toxin</keyword>
<dbReference type="SMR" id="P0DMQ0"/>
<dbReference type="GO" id="GO:0005576">
    <property type="term" value="C:extracellular region"/>
    <property type="evidence" value="ECO:0007669"/>
    <property type="project" value="UniProtKB-SubCell"/>
</dbReference>
<dbReference type="GO" id="GO:0019855">
    <property type="term" value="F:calcium channel inhibitor activity"/>
    <property type="evidence" value="ECO:0007669"/>
    <property type="project" value="InterPro"/>
</dbReference>
<dbReference type="GO" id="GO:0090729">
    <property type="term" value="F:toxin activity"/>
    <property type="evidence" value="ECO:0007669"/>
    <property type="project" value="UniProtKB-KW"/>
</dbReference>
<dbReference type="GO" id="GO:0006952">
    <property type="term" value="P:defense response"/>
    <property type="evidence" value="ECO:0007669"/>
    <property type="project" value="InterPro"/>
</dbReference>
<dbReference type="InterPro" id="IPR009415">
    <property type="entry name" value="Omega-atracotox"/>
</dbReference>
<dbReference type="Pfam" id="PF06357">
    <property type="entry name" value="Omega-toxin"/>
    <property type="match status" value="1"/>
</dbReference>
<dbReference type="SUPFAM" id="SSF57059">
    <property type="entry name" value="omega toxin-like"/>
    <property type="match status" value="1"/>
</dbReference>
<accession>P0DMQ0</accession>
<comment type="function">
    <text evidence="2">Inhibits insect, but not mammalian, voltage-gated calcium channels (Cav).</text>
</comment>
<comment type="subcellular location">
    <subcellularLocation>
        <location evidence="5">Secreted</location>
    </subcellularLocation>
</comment>
<comment type="tissue specificity">
    <text evidence="5">Expressed by the venom gland.</text>
</comment>
<comment type="domain">
    <text evidence="1">The presence of a 'disulfide through disulfide knot' structurally defines this protein as a knottin.</text>
</comment>
<comment type="similarity">
    <text evidence="4">Belongs to the neurotoxin 08 (Shiva) family. 01 (omega toxin) subfamily.</text>
</comment>
<comment type="caution">
    <text>Signal and propeptide sequences are imported from ArachnoServer. The sequence differences may reflect different paralogs.</text>
</comment>
<evidence type="ECO:0000250" key="1"/>
<evidence type="ECO:0000250" key="2">
    <source>
        <dbReference type="UniProtKB" id="P56207"/>
    </source>
</evidence>
<evidence type="ECO:0000255" key="3"/>
<evidence type="ECO:0000303" key="4">
    <source>
    </source>
</evidence>
<evidence type="ECO:0000305" key="5">
    <source>
    </source>
</evidence>
<reference key="1">
    <citation type="journal article" date="2014" name="BMC Genomics">
        <title>Diversification of a single ancestral gene into a successful toxin superfamily in highly venomous Australian funnel-web spiders.</title>
        <authorList>
            <person name="Pineda S.S."/>
            <person name="Sollod B.L."/>
            <person name="Wilson D."/>
            <person name="Darling A."/>
            <person name="Sunagar K."/>
            <person name="Undheim E.A."/>
            <person name="Kely L."/>
            <person name="Antunes A."/>
            <person name="Fry B.G."/>
            <person name="King G.F."/>
        </authorList>
    </citation>
    <scope>NUCLEOTIDE SEQUENCE [MRNA]</scope>
    <source>
        <tissue>Venom gland</tissue>
    </source>
</reference>
<name>TO1A_HADMO</name>